<keyword id="KW-1185">Reference proteome</keyword>
<comment type="similarity">
    <text evidence="1">Belongs to the UPF0147 family.</text>
</comment>
<comment type="sequence caution" evidence="1">
    <conflict type="erroneous initiation">
        <sequence resource="EMBL-CDS" id="AAB99429"/>
    </conflict>
</comment>
<gene>
    <name type="ordered locus">MJ1419</name>
</gene>
<name>Y1419_METJA</name>
<dbReference type="EMBL" id="L77117">
    <property type="protein sequence ID" value="AAB99429.1"/>
    <property type="status" value="ALT_INIT"/>
    <property type="molecule type" value="Genomic_DNA"/>
</dbReference>
<dbReference type="PIR" id="B64477">
    <property type="entry name" value="B64477"/>
</dbReference>
<dbReference type="RefSeq" id="WP_012980461.1">
    <property type="nucleotide sequence ID" value="NC_000909.1"/>
</dbReference>
<dbReference type="SMR" id="Q58814"/>
<dbReference type="FunCoup" id="Q58814">
    <property type="interactions" value="2"/>
</dbReference>
<dbReference type="STRING" id="243232.MJ_1419"/>
<dbReference type="PaxDb" id="243232-MJ_1419"/>
<dbReference type="EnsemblBacteria" id="AAB99429">
    <property type="protein sequence ID" value="AAB99429"/>
    <property type="gene ID" value="MJ_1419"/>
</dbReference>
<dbReference type="GeneID" id="24891202"/>
<dbReference type="KEGG" id="mja:MJ_1419"/>
<dbReference type="eggNOG" id="arCOG04308">
    <property type="taxonomic scope" value="Archaea"/>
</dbReference>
<dbReference type="HOGENOM" id="CLU_165882_1_0_2"/>
<dbReference type="InParanoid" id="Q58814"/>
<dbReference type="OrthoDB" id="65304at2157"/>
<dbReference type="PhylomeDB" id="Q58814"/>
<dbReference type="Proteomes" id="UP000000805">
    <property type="component" value="Chromosome"/>
</dbReference>
<dbReference type="Gene3D" id="1.20.1440.50">
    <property type="entry name" value="Ta0600-like"/>
    <property type="match status" value="1"/>
</dbReference>
<dbReference type="HAMAP" id="MF_00342">
    <property type="entry name" value="UPF0147"/>
    <property type="match status" value="1"/>
</dbReference>
<dbReference type="InterPro" id="IPR023130">
    <property type="entry name" value="Ta0600-like_sf"/>
</dbReference>
<dbReference type="InterPro" id="IPR005354">
    <property type="entry name" value="UPF0147"/>
</dbReference>
<dbReference type="NCBIfam" id="NF003319">
    <property type="entry name" value="PRK04330.1"/>
    <property type="match status" value="1"/>
</dbReference>
<dbReference type="Pfam" id="PF03685">
    <property type="entry name" value="UPF0147"/>
    <property type="match status" value="1"/>
</dbReference>
<dbReference type="SUPFAM" id="SSF158436">
    <property type="entry name" value="Ta0600-like"/>
    <property type="match status" value="1"/>
</dbReference>
<feature type="chain" id="PRO_0000150908" description="UPF0147 protein MJ1419">
    <location>
        <begin position="1"/>
        <end position="93"/>
    </location>
</feature>
<reference key="1">
    <citation type="journal article" date="1996" name="Science">
        <title>Complete genome sequence of the methanogenic archaeon, Methanococcus jannaschii.</title>
        <authorList>
            <person name="Bult C.J."/>
            <person name="White O."/>
            <person name="Olsen G.J."/>
            <person name="Zhou L."/>
            <person name="Fleischmann R.D."/>
            <person name="Sutton G.G."/>
            <person name="Blake J.A."/>
            <person name="FitzGerald L.M."/>
            <person name="Clayton R.A."/>
            <person name="Gocayne J.D."/>
            <person name="Kerlavage A.R."/>
            <person name="Dougherty B.A."/>
            <person name="Tomb J.-F."/>
            <person name="Adams M.D."/>
            <person name="Reich C.I."/>
            <person name="Overbeek R."/>
            <person name="Kirkness E.F."/>
            <person name="Weinstock K.G."/>
            <person name="Merrick J.M."/>
            <person name="Glodek A."/>
            <person name="Scott J.L."/>
            <person name="Geoghagen N.S.M."/>
            <person name="Weidman J.F."/>
            <person name="Fuhrmann J.L."/>
            <person name="Nguyen D."/>
            <person name="Utterback T.R."/>
            <person name="Kelley J.M."/>
            <person name="Peterson J.D."/>
            <person name="Sadow P.W."/>
            <person name="Hanna M.C."/>
            <person name="Cotton M.D."/>
            <person name="Roberts K.M."/>
            <person name="Hurst M.A."/>
            <person name="Kaine B.P."/>
            <person name="Borodovsky M."/>
            <person name="Klenk H.-P."/>
            <person name="Fraser C.M."/>
            <person name="Smith H.O."/>
            <person name="Woese C.R."/>
            <person name="Venter J.C."/>
        </authorList>
    </citation>
    <scope>NUCLEOTIDE SEQUENCE [LARGE SCALE GENOMIC DNA]</scope>
    <source>
        <strain>ATCC 43067 / DSM 2661 / JAL-1 / JCM 10045 / NBRC 100440</strain>
    </source>
</reference>
<sequence>MVFGSAASEKTPEEILKGVALMLDEIINDTTVPRNIRAAAEKAKEAVLKEGEEPIVRSATAIHILDEISNDPNMPLHTRTQIWSIVSELERVK</sequence>
<evidence type="ECO:0000305" key="1"/>
<organism>
    <name type="scientific">Methanocaldococcus jannaschii (strain ATCC 43067 / DSM 2661 / JAL-1 / JCM 10045 / NBRC 100440)</name>
    <name type="common">Methanococcus jannaschii</name>
    <dbReference type="NCBI Taxonomy" id="243232"/>
    <lineage>
        <taxon>Archaea</taxon>
        <taxon>Methanobacteriati</taxon>
        <taxon>Methanobacteriota</taxon>
        <taxon>Methanomada group</taxon>
        <taxon>Methanococci</taxon>
        <taxon>Methanococcales</taxon>
        <taxon>Methanocaldococcaceae</taxon>
        <taxon>Methanocaldococcus</taxon>
    </lineage>
</organism>
<proteinExistence type="inferred from homology"/>
<protein>
    <recommendedName>
        <fullName>UPF0147 protein MJ1419</fullName>
    </recommendedName>
</protein>
<accession>Q58814</accession>